<dbReference type="EMBL" id="CM000133">
    <property type="protein sequence ID" value="EEC83453.1"/>
    <property type="status" value="ALT_SEQ"/>
    <property type="molecule type" value="Genomic_DNA"/>
</dbReference>
<dbReference type="SMR" id="P0C8Z0"/>
<dbReference type="STRING" id="39946.P0C8Z0"/>
<dbReference type="EnsemblPlants" id="OsGoSa_08g0012740.01">
    <property type="protein sequence ID" value="OsGoSa_08g0012740.01"/>
    <property type="gene ID" value="OsGoSa_08g0012740"/>
</dbReference>
<dbReference type="EnsemblPlants" id="OsIR64_08g0013180.01">
    <property type="protein sequence ID" value="OsIR64_08g0013180.01"/>
    <property type="gene ID" value="OsIR64_08g0013180"/>
</dbReference>
<dbReference type="EnsemblPlants" id="OsKYG_08g0012870.01">
    <property type="protein sequence ID" value="OsKYG_08g0012870.01"/>
    <property type="gene ID" value="OsKYG_08g0012870"/>
</dbReference>
<dbReference type="EnsemblPlants" id="OsMH63_08G013290_01">
    <property type="protein sequence ID" value="OsMH63_08G013290_01"/>
    <property type="gene ID" value="OsMH63_08G013290"/>
</dbReference>
<dbReference type="EnsemblPlants" id="OsPr106_08g0013080.01">
    <property type="protein sequence ID" value="OsPr106_08g0013080.01"/>
    <property type="gene ID" value="OsPr106_08g0013080"/>
</dbReference>
<dbReference type="Gramene" id="OsGoSa_08g0012740.01">
    <property type="protein sequence ID" value="OsGoSa_08g0012740.01"/>
    <property type="gene ID" value="OsGoSa_08g0012740"/>
</dbReference>
<dbReference type="Gramene" id="OsIR64_08g0013180.01">
    <property type="protein sequence ID" value="OsIR64_08g0013180.01"/>
    <property type="gene ID" value="OsIR64_08g0013180"/>
</dbReference>
<dbReference type="Gramene" id="OsKYG_08g0012870.01">
    <property type="protein sequence ID" value="OsKYG_08g0012870.01"/>
    <property type="gene ID" value="OsKYG_08g0012870"/>
</dbReference>
<dbReference type="Gramene" id="OsMH63_08G013290_01">
    <property type="protein sequence ID" value="OsMH63_08G013290_01"/>
    <property type="gene ID" value="OsMH63_08G013290"/>
</dbReference>
<dbReference type="Gramene" id="OsPr106_08g0013080.01">
    <property type="protein sequence ID" value="OsPr106_08g0013080.01"/>
    <property type="gene ID" value="OsPr106_08g0013080"/>
</dbReference>
<dbReference type="HOGENOM" id="CLU_078883_2_0_1"/>
<dbReference type="OrthoDB" id="1564555at2759"/>
<dbReference type="Proteomes" id="UP000007015">
    <property type="component" value="Chromosome 8"/>
</dbReference>
<dbReference type="GO" id="GO:0005829">
    <property type="term" value="C:cytosol"/>
    <property type="evidence" value="ECO:0007669"/>
    <property type="project" value="TreeGrafter"/>
</dbReference>
<dbReference type="GO" id="GO:0005634">
    <property type="term" value="C:nucleus"/>
    <property type="evidence" value="ECO:0007669"/>
    <property type="project" value="TreeGrafter"/>
</dbReference>
<dbReference type="GO" id="GO:0051879">
    <property type="term" value="F:Hsp90 protein binding"/>
    <property type="evidence" value="ECO:0007669"/>
    <property type="project" value="InterPro"/>
</dbReference>
<dbReference type="GO" id="GO:0051087">
    <property type="term" value="F:protein-folding chaperone binding"/>
    <property type="evidence" value="ECO:0007669"/>
    <property type="project" value="TreeGrafter"/>
</dbReference>
<dbReference type="GO" id="GO:0051131">
    <property type="term" value="P:chaperone-mediated protein complex assembly"/>
    <property type="evidence" value="ECO:0007669"/>
    <property type="project" value="TreeGrafter"/>
</dbReference>
<dbReference type="GO" id="GO:0006457">
    <property type="term" value="P:protein folding"/>
    <property type="evidence" value="ECO:0007669"/>
    <property type="project" value="TreeGrafter"/>
</dbReference>
<dbReference type="GO" id="GO:0006950">
    <property type="term" value="P:response to stress"/>
    <property type="evidence" value="ECO:0007669"/>
    <property type="project" value="UniProtKB-ARBA"/>
</dbReference>
<dbReference type="CDD" id="cd06465">
    <property type="entry name" value="p23_hB-ind1_like"/>
    <property type="match status" value="1"/>
</dbReference>
<dbReference type="FunFam" id="2.60.40.790:FF:000013">
    <property type="entry name" value="Very-long-chain (3R)-3-hydroxyacyl-CoA dehydratase"/>
    <property type="match status" value="1"/>
</dbReference>
<dbReference type="Gene3D" id="2.60.40.790">
    <property type="match status" value="1"/>
</dbReference>
<dbReference type="InterPro" id="IPR007052">
    <property type="entry name" value="CS_dom"/>
</dbReference>
<dbReference type="InterPro" id="IPR008978">
    <property type="entry name" value="HSP20-like_chaperone"/>
</dbReference>
<dbReference type="InterPro" id="IPR045250">
    <property type="entry name" value="p23-like"/>
</dbReference>
<dbReference type="PANTHER" id="PTHR22932:SF22">
    <property type="entry name" value="CO-CHAPERONE PROTEIN P23"/>
    <property type="match status" value="1"/>
</dbReference>
<dbReference type="PANTHER" id="PTHR22932">
    <property type="entry name" value="TELOMERASE-BINDING PROTEIN P23 HSP90 CO-CHAPERONE"/>
    <property type="match status" value="1"/>
</dbReference>
<dbReference type="Pfam" id="PF04969">
    <property type="entry name" value="CS"/>
    <property type="match status" value="1"/>
</dbReference>
<dbReference type="SUPFAM" id="SSF49764">
    <property type="entry name" value="HSP20-like chaperones"/>
    <property type="match status" value="1"/>
</dbReference>
<dbReference type="PROSITE" id="PS51203">
    <property type="entry name" value="CS"/>
    <property type="match status" value="1"/>
</dbReference>
<sequence length="210" mass="22579">MSRHPEVKWAQRIDKVYITVQLADAKDAKVNLEPEGVFSFSATAGTDGNLYESKLELNDKVNVEESKISVGVRSIFCIVEKAEAKWWKKLVRDDQKAPHFVKVDWDKWVDEDDDGADVNVDGMDFSNFGGMGGMGGMGGMGDMMGGMGGMGGMGGMAEMMGGMGGMGGMGGMDEFEDESDDEEEVSKPQDAEKAAEAGKSQESDAKTETS</sequence>
<comment type="induction">
    <text evidence="3">Up-regulated in the leaf sheaths of rice plants grown from seeds that were inoculated with the nonpathogenic P.fluorescens strain KH-1.</text>
</comment>
<comment type="mass spectrometry" mass="22836.0" method="Electrospray" evidence="3"/>
<comment type="similarity">
    <text evidence="4">Belongs to the p23/wos2 family.</text>
</comment>
<comment type="sequence caution" evidence="4">
    <conflict type="erroneous gene model prediction">
        <sequence resource="EMBL-CDS" id="EEC83453"/>
    </conflict>
</comment>
<organism>
    <name type="scientific">Oryza sativa subsp. indica</name>
    <name type="common">Rice</name>
    <dbReference type="NCBI Taxonomy" id="39946"/>
    <lineage>
        <taxon>Eukaryota</taxon>
        <taxon>Viridiplantae</taxon>
        <taxon>Streptophyta</taxon>
        <taxon>Embryophyta</taxon>
        <taxon>Tracheophyta</taxon>
        <taxon>Spermatophyta</taxon>
        <taxon>Magnoliopsida</taxon>
        <taxon>Liliopsida</taxon>
        <taxon>Poales</taxon>
        <taxon>Poaceae</taxon>
        <taxon>BOP clade</taxon>
        <taxon>Oryzoideae</taxon>
        <taxon>Oryzeae</taxon>
        <taxon>Oryzinae</taxon>
        <taxon>Oryza</taxon>
        <taxon>Oryza sativa</taxon>
    </lineage>
</organism>
<accession>P0C8Z0</accession>
<accession>B8BA14</accession>
<keyword id="KW-1185">Reference proteome</keyword>
<evidence type="ECO:0000255" key="1">
    <source>
        <dbReference type="PROSITE-ProRule" id="PRU00547"/>
    </source>
</evidence>
<evidence type="ECO:0000256" key="2">
    <source>
        <dbReference type="SAM" id="MobiDB-lite"/>
    </source>
</evidence>
<evidence type="ECO:0000269" key="3">
    <source>
    </source>
</evidence>
<evidence type="ECO:0000305" key="4"/>
<protein>
    <recommendedName>
        <fullName>Uncharacterized protein OsI_027940</fullName>
    </recommendedName>
</protein>
<feature type="chain" id="PRO_0000361770" description="Uncharacterized protein OsI_027940">
    <location>
        <begin position="1"/>
        <end position="210"/>
    </location>
</feature>
<feature type="domain" description="CS" evidence="1">
    <location>
        <begin position="2"/>
        <end position="91"/>
    </location>
</feature>
<feature type="region of interest" description="Disordered" evidence="2">
    <location>
        <begin position="165"/>
        <end position="210"/>
    </location>
</feature>
<feature type="compositionally biased region" description="Acidic residues" evidence="2">
    <location>
        <begin position="173"/>
        <end position="184"/>
    </location>
</feature>
<feature type="compositionally biased region" description="Basic and acidic residues" evidence="2">
    <location>
        <begin position="185"/>
        <end position="210"/>
    </location>
</feature>
<reference key="1">
    <citation type="journal article" date="2005" name="PLoS Biol.">
        <title>The genomes of Oryza sativa: a history of duplications.</title>
        <authorList>
            <person name="Yu J."/>
            <person name="Wang J."/>
            <person name="Lin W."/>
            <person name="Li S."/>
            <person name="Li H."/>
            <person name="Zhou J."/>
            <person name="Ni P."/>
            <person name="Dong W."/>
            <person name="Hu S."/>
            <person name="Zeng C."/>
            <person name="Zhang J."/>
            <person name="Zhang Y."/>
            <person name="Li R."/>
            <person name="Xu Z."/>
            <person name="Li S."/>
            <person name="Li X."/>
            <person name="Zheng H."/>
            <person name="Cong L."/>
            <person name="Lin L."/>
            <person name="Yin J."/>
            <person name="Geng J."/>
            <person name="Li G."/>
            <person name="Shi J."/>
            <person name="Liu J."/>
            <person name="Lv H."/>
            <person name="Li J."/>
            <person name="Wang J."/>
            <person name="Deng Y."/>
            <person name="Ran L."/>
            <person name="Shi X."/>
            <person name="Wang X."/>
            <person name="Wu Q."/>
            <person name="Li C."/>
            <person name="Ren X."/>
            <person name="Wang J."/>
            <person name="Wang X."/>
            <person name="Li D."/>
            <person name="Liu D."/>
            <person name="Zhang X."/>
            <person name="Ji Z."/>
            <person name="Zhao W."/>
            <person name="Sun Y."/>
            <person name="Zhang Z."/>
            <person name="Bao J."/>
            <person name="Han Y."/>
            <person name="Dong L."/>
            <person name="Ji J."/>
            <person name="Chen P."/>
            <person name="Wu S."/>
            <person name="Liu J."/>
            <person name="Xiao Y."/>
            <person name="Bu D."/>
            <person name="Tan J."/>
            <person name="Yang L."/>
            <person name="Ye C."/>
            <person name="Zhang J."/>
            <person name="Xu J."/>
            <person name="Zhou Y."/>
            <person name="Yu Y."/>
            <person name="Zhang B."/>
            <person name="Zhuang S."/>
            <person name="Wei H."/>
            <person name="Liu B."/>
            <person name="Lei M."/>
            <person name="Yu H."/>
            <person name="Li Y."/>
            <person name="Xu H."/>
            <person name="Wei S."/>
            <person name="He X."/>
            <person name="Fang L."/>
            <person name="Zhang Z."/>
            <person name="Zhang Y."/>
            <person name="Huang X."/>
            <person name="Su Z."/>
            <person name="Tong W."/>
            <person name="Li J."/>
            <person name="Tong Z."/>
            <person name="Li S."/>
            <person name="Ye J."/>
            <person name="Wang L."/>
            <person name="Fang L."/>
            <person name="Lei T."/>
            <person name="Chen C.-S."/>
            <person name="Chen H.-C."/>
            <person name="Xu Z."/>
            <person name="Li H."/>
            <person name="Huang H."/>
            <person name="Zhang F."/>
            <person name="Xu H."/>
            <person name="Li N."/>
            <person name="Zhao C."/>
            <person name="Li S."/>
            <person name="Dong L."/>
            <person name="Huang Y."/>
            <person name="Li L."/>
            <person name="Xi Y."/>
            <person name="Qi Q."/>
            <person name="Li W."/>
            <person name="Zhang B."/>
            <person name="Hu W."/>
            <person name="Zhang Y."/>
            <person name="Tian X."/>
            <person name="Jiao Y."/>
            <person name="Liang X."/>
            <person name="Jin J."/>
            <person name="Gao L."/>
            <person name="Zheng W."/>
            <person name="Hao B."/>
            <person name="Liu S.-M."/>
            <person name="Wang W."/>
            <person name="Yuan L."/>
            <person name="Cao M."/>
            <person name="McDermott J."/>
            <person name="Samudrala R."/>
            <person name="Wang J."/>
            <person name="Wong G.K.-S."/>
            <person name="Yang H."/>
        </authorList>
    </citation>
    <scope>NUCLEOTIDE SEQUENCE [LARGE SCALE GENOMIC DNA]</scope>
    <source>
        <strain>cv. 93-11</strain>
    </source>
</reference>
<reference key="2">
    <citation type="journal article" date="2009" name="Proteome Sci.">
        <title>Understanding the molecular basis of plant growth promotional effect of Pseudomonas fluorescens on rice through protein profiling.</title>
        <authorList>
            <person name="Kandasamy S."/>
            <person name="Loganathan K."/>
            <person name="Muthuraj R."/>
            <person name="Duraisamy S."/>
            <person name="Seetharaman S."/>
            <person name="Thiruvengadam R."/>
            <person name="Ponnusamy B."/>
            <person name="Ramasamy S."/>
        </authorList>
    </citation>
    <scope>IDENTIFICATION BY MASS SPECTROMETRY</scope>
    <scope>INDUCTION</scope>
    <source>
        <strain>cv. CO43</strain>
        <tissue>Leaf</tissue>
    </source>
</reference>
<gene>
    <name type="ORF">OsI_027940</name>
    <name type="ORF">OsI_28951</name>
</gene>
<proteinExistence type="evidence at protein level"/>
<name>Y8359_ORYSI</name>